<protein>
    <recommendedName>
        <fullName evidence="2">Large ribosomal subunit protein uL16</fullName>
    </recommendedName>
    <alternativeName>
        <fullName>60S ribosomal protein L10</fullName>
    </alternativeName>
    <alternativeName>
        <fullName>EQM</fullName>
    </alternativeName>
</protein>
<evidence type="ECO:0000250" key="1"/>
<evidence type="ECO:0000305" key="2"/>
<accession>P93847</accession>
<accession>P93778</accession>
<feature type="chain" id="PRO_0000147123" description="Large ribosomal subunit protein uL16">
    <location>
        <begin position="1"/>
        <end position="219"/>
    </location>
</feature>
<feature type="sequence variant" description="In clone TM002.">
    <original>CN</original>
    <variation>SS</variation>
    <location>
        <begin position="72"/>
        <end position="73"/>
    </location>
</feature>
<feature type="sequence variant" description="In clone TM002.">
    <original>A</original>
    <variation>T</variation>
    <location>
        <position position="80"/>
    </location>
</feature>
<organism>
    <name type="scientific">Solanum melongena</name>
    <name type="common">Eggplant</name>
    <name type="synonym">Aubergine</name>
    <dbReference type="NCBI Taxonomy" id="223891"/>
    <lineage>
        <taxon>Eukaryota</taxon>
        <taxon>Viridiplantae</taxon>
        <taxon>Streptophyta</taxon>
        <taxon>Embryophyta</taxon>
        <taxon>Tracheophyta</taxon>
        <taxon>Spermatophyta</taxon>
        <taxon>Magnoliopsida</taxon>
        <taxon>eudicotyledons</taxon>
        <taxon>Gunneridae</taxon>
        <taxon>Pentapetalae</taxon>
        <taxon>asterids</taxon>
        <taxon>lamiids</taxon>
        <taxon>Solanales</taxon>
        <taxon>Solanaceae</taxon>
        <taxon>Solanoideae</taxon>
        <taxon>Solaneae</taxon>
        <taxon>Solanum</taxon>
    </lineage>
</organism>
<reference key="1">
    <citation type="submission" date="1997-03" db="EMBL/GenBank/DDBJ databases">
        <authorList>
            <person name="Momiyama T."/>
            <person name="Kayano T."/>
            <person name="Takaiwa F."/>
            <person name="Takayanagi K."/>
        </authorList>
    </citation>
    <scope>NUCLEOTIDE SEQUENCE [MRNA]</scope>
    <source>
        <tissue>Cotyledon</tissue>
    </source>
</reference>
<sequence>MGRRPARCYRQIKNKPYPKSRFCRGVPDPKIRIYDVGMKRKGVDEFPFCVHLVSWEKENVSSEALEAARIACNKYMTKSAGKDAFHLRVRVHPFHVLRINKMLSCAGADRLQTGMRGAFGKPQGVCARVAIGQVLLSVRCKDGNSNHAQEALRRAKFKFPGRQKIIVSRKWGFTKFSRTDYLKYKSENRIVPDGVNAKLLGNHGPLAARQPGRAFLSSS</sequence>
<gene>
    <name type="primary">RPL10</name>
</gene>
<comment type="subunit">
    <text evidence="1">Component of the small ribosomal subunit. Mature ribosomes consist of a small (40S) and a large (60S) subunit. The 40S subunit contains about 33 different proteins and 1 molecule of RNA (18S). The 60S subunit contains about 49 different proteins and 3 molecules of RNA (25S, 5.8S and 5S) (By similarity).</text>
</comment>
<comment type="similarity">
    <text evidence="2">Belongs to the universal ribosomal protein uL16 family.</text>
</comment>
<proteinExistence type="evidence at transcript level"/>
<keyword id="KW-0687">Ribonucleoprotein</keyword>
<keyword id="KW-0689">Ribosomal protein</keyword>
<name>RL10_SOLME</name>
<dbReference type="EMBL" id="AB001891">
    <property type="protein sequence ID" value="BAA19462.1"/>
    <property type="molecule type" value="mRNA"/>
</dbReference>
<dbReference type="EMBL" id="AB001582">
    <property type="protein sequence ID" value="BAA19414.1"/>
    <property type="molecule type" value="mRNA"/>
</dbReference>
<dbReference type="SMR" id="P93847"/>
<dbReference type="GO" id="GO:1990904">
    <property type="term" value="C:ribonucleoprotein complex"/>
    <property type="evidence" value="ECO:0007669"/>
    <property type="project" value="UniProtKB-KW"/>
</dbReference>
<dbReference type="GO" id="GO:0005840">
    <property type="term" value="C:ribosome"/>
    <property type="evidence" value="ECO:0007669"/>
    <property type="project" value="UniProtKB-KW"/>
</dbReference>
<dbReference type="GO" id="GO:0003735">
    <property type="term" value="F:structural constituent of ribosome"/>
    <property type="evidence" value="ECO:0007669"/>
    <property type="project" value="InterPro"/>
</dbReference>
<dbReference type="GO" id="GO:0006412">
    <property type="term" value="P:translation"/>
    <property type="evidence" value="ECO:0007669"/>
    <property type="project" value="InterPro"/>
</dbReference>
<dbReference type="CDD" id="cd01433">
    <property type="entry name" value="Ribosomal_L16_L10e"/>
    <property type="match status" value="1"/>
</dbReference>
<dbReference type="FunFam" id="3.90.1170.10:FF:000002">
    <property type="entry name" value="60S ribosomal protein L10"/>
    <property type="match status" value="1"/>
</dbReference>
<dbReference type="Gene3D" id="3.90.1170.10">
    <property type="entry name" value="Ribosomal protein L10e/L16"/>
    <property type="match status" value="1"/>
</dbReference>
<dbReference type="InterPro" id="IPR047873">
    <property type="entry name" value="Ribosomal_uL16"/>
</dbReference>
<dbReference type="InterPro" id="IPR018255">
    <property type="entry name" value="Ribosomal_uL16_CS_euk_arc"/>
</dbReference>
<dbReference type="InterPro" id="IPR016180">
    <property type="entry name" value="Ribosomal_uL16_dom"/>
</dbReference>
<dbReference type="InterPro" id="IPR001197">
    <property type="entry name" value="Ribosomal_uL16_euk_arch"/>
</dbReference>
<dbReference type="InterPro" id="IPR036920">
    <property type="entry name" value="Ribosomal_uL16_sf"/>
</dbReference>
<dbReference type="NCBIfam" id="NF003239">
    <property type="entry name" value="PRK04199.1-4"/>
    <property type="match status" value="1"/>
</dbReference>
<dbReference type="NCBIfam" id="TIGR00279">
    <property type="entry name" value="uL16_euk_arch"/>
    <property type="match status" value="1"/>
</dbReference>
<dbReference type="PANTHER" id="PTHR11726">
    <property type="entry name" value="60S RIBOSOMAL PROTEIN L10"/>
    <property type="match status" value="1"/>
</dbReference>
<dbReference type="Pfam" id="PF00252">
    <property type="entry name" value="Ribosomal_L16"/>
    <property type="match status" value="1"/>
</dbReference>
<dbReference type="PIRSF" id="PIRSF005590">
    <property type="entry name" value="Ribosomal_L10"/>
    <property type="match status" value="1"/>
</dbReference>
<dbReference type="SUPFAM" id="SSF54686">
    <property type="entry name" value="Ribosomal protein L16p/L10e"/>
    <property type="match status" value="1"/>
</dbReference>
<dbReference type="PROSITE" id="PS01257">
    <property type="entry name" value="RIBOSOMAL_L10E"/>
    <property type="match status" value="1"/>
</dbReference>